<sequence>MATYHHWTVGQALALFDKPLLELLFEAQQVHRQHFDPRQVQVSTLLSIKTGACPEDCKYCPQSSRYKTGLESERLMQVEQVLESAKKAKAAGSTRFCMGAAWKNPHERDMPYLAKMVEGVKALGMETCMTLGSLSKQQAHRLADAGLDYYNHNLDTSPEFYGSIITTRSYQERLDTLNEVRDAGIKVCSGGIVGLGETVRDRAGLLVQLANLPKPPESVPINMLVKVKGTPLENNAEVDAFEFIRTIAVARIMMPSSYVRLSAGREQMNEQTQAMCFMAGANSIFYGCKLLTTPNPDEDKDLQLFRKLGLNPQQTATSHGDREQQQALTEQLLHGDTAQFYNAAV</sequence>
<name>BIOB_YERPS</name>
<dbReference type="EC" id="2.8.1.6" evidence="1"/>
<dbReference type="EMBL" id="BX936398">
    <property type="protein sequence ID" value="CAH20422.1"/>
    <property type="molecule type" value="Genomic_DNA"/>
</dbReference>
<dbReference type="RefSeq" id="WP_002210762.1">
    <property type="nucleotide sequence ID" value="NZ_CP009712.1"/>
</dbReference>
<dbReference type="SMR" id="Q66D67"/>
<dbReference type="GeneID" id="57977290"/>
<dbReference type="KEGG" id="ypo:BZ17_1346"/>
<dbReference type="KEGG" id="yps:YPTB1182"/>
<dbReference type="PATRIC" id="fig|273123.14.peg.1437"/>
<dbReference type="UniPathway" id="UPA00078">
    <property type="reaction ID" value="UER00162"/>
</dbReference>
<dbReference type="Proteomes" id="UP000001011">
    <property type="component" value="Chromosome"/>
</dbReference>
<dbReference type="GO" id="GO:0051537">
    <property type="term" value="F:2 iron, 2 sulfur cluster binding"/>
    <property type="evidence" value="ECO:0007669"/>
    <property type="project" value="UniProtKB-KW"/>
</dbReference>
<dbReference type="GO" id="GO:0051539">
    <property type="term" value="F:4 iron, 4 sulfur cluster binding"/>
    <property type="evidence" value="ECO:0007669"/>
    <property type="project" value="UniProtKB-KW"/>
</dbReference>
<dbReference type="GO" id="GO:0004076">
    <property type="term" value="F:biotin synthase activity"/>
    <property type="evidence" value="ECO:0007669"/>
    <property type="project" value="UniProtKB-UniRule"/>
</dbReference>
<dbReference type="GO" id="GO:0005506">
    <property type="term" value="F:iron ion binding"/>
    <property type="evidence" value="ECO:0007669"/>
    <property type="project" value="UniProtKB-UniRule"/>
</dbReference>
<dbReference type="GO" id="GO:0009102">
    <property type="term" value="P:biotin biosynthetic process"/>
    <property type="evidence" value="ECO:0007669"/>
    <property type="project" value="UniProtKB-UniRule"/>
</dbReference>
<dbReference type="CDD" id="cd01335">
    <property type="entry name" value="Radical_SAM"/>
    <property type="match status" value="1"/>
</dbReference>
<dbReference type="FunFam" id="3.20.20.70:FF:000011">
    <property type="entry name" value="Biotin synthase"/>
    <property type="match status" value="1"/>
</dbReference>
<dbReference type="Gene3D" id="3.20.20.70">
    <property type="entry name" value="Aldolase class I"/>
    <property type="match status" value="1"/>
</dbReference>
<dbReference type="HAMAP" id="MF_01694">
    <property type="entry name" value="BioB"/>
    <property type="match status" value="1"/>
</dbReference>
<dbReference type="InterPro" id="IPR013785">
    <property type="entry name" value="Aldolase_TIM"/>
</dbReference>
<dbReference type="InterPro" id="IPR010722">
    <property type="entry name" value="BATS_dom"/>
</dbReference>
<dbReference type="InterPro" id="IPR002684">
    <property type="entry name" value="Biotin_synth/BioAB"/>
</dbReference>
<dbReference type="InterPro" id="IPR024177">
    <property type="entry name" value="Biotin_synthase"/>
</dbReference>
<dbReference type="InterPro" id="IPR006638">
    <property type="entry name" value="Elp3/MiaA/NifB-like_rSAM"/>
</dbReference>
<dbReference type="InterPro" id="IPR007197">
    <property type="entry name" value="rSAM"/>
</dbReference>
<dbReference type="NCBIfam" id="TIGR00433">
    <property type="entry name" value="bioB"/>
    <property type="match status" value="1"/>
</dbReference>
<dbReference type="PANTHER" id="PTHR22976">
    <property type="entry name" value="BIOTIN SYNTHASE"/>
    <property type="match status" value="1"/>
</dbReference>
<dbReference type="PANTHER" id="PTHR22976:SF2">
    <property type="entry name" value="BIOTIN SYNTHASE, MITOCHONDRIAL"/>
    <property type="match status" value="1"/>
</dbReference>
<dbReference type="Pfam" id="PF06968">
    <property type="entry name" value="BATS"/>
    <property type="match status" value="1"/>
</dbReference>
<dbReference type="Pfam" id="PF04055">
    <property type="entry name" value="Radical_SAM"/>
    <property type="match status" value="1"/>
</dbReference>
<dbReference type="PIRSF" id="PIRSF001619">
    <property type="entry name" value="Biotin_synth"/>
    <property type="match status" value="1"/>
</dbReference>
<dbReference type="SFLD" id="SFLDF00272">
    <property type="entry name" value="biotin_synthase"/>
    <property type="match status" value="1"/>
</dbReference>
<dbReference type="SFLD" id="SFLDS00029">
    <property type="entry name" value="Radical_SAM"/>
    <property type="match status" value="1"/>
</dbReference>
<dbReference type="SMART" id="SM00876">
    <property type="entry name" value="BATS"/>
    <property type="match status" value="1"/>
</dbReference>
<dbReference type="SMART" id="SM00729">
    <property type="entry name" value="Elp3"/>
    <property type="match status" value="1"/>
</dbReference>
<dbReference type="SUPFAM" id="SSF102114">
    <property type="entry name" value="Radical SAM enzymes"/>
    <property type="match status" value="1"/>
</dbReference>
<dbReference type="PROSITE" id="PS51918">
    <property type="entry name" value="RADICAL_SAM"/>
    <property type="match status" value="1"/>
</dbReference>
<proteinExistence type="inferred from homology"/>
<reference key="1">
    <citation type="journal article" date="2004" name="Proc. Natl. Acad. Sci. U.S.A.">
        <title>Insights into the evolution of Yersinia pestis through whole-genome comparison with Yersinia pseudotuberculosis.</title>
        <authorList>
            <person name="Chain P.S.G."/>
            <person name="Carniel E."/>
            <person name="Larimer F.W."/>
            <person name="Lamerdin J."/>
            <person name="Stoutland P.O."/>
            <person name="Regala W.M."/>
            <person name="Georgescu A.M."/>
            <person name="Vergez L.M."/>
            <person name="Land M.L."/>
            <person name="Motin V.L."/>
            <person name="Brubaker R.R."/>
            <person name="Fowler J."/>
            <person name="Hinnebusch J."/>
            <person name="Marceau M."/>
            <person name="Medigue C."/>
            <person name="Simonet M."/>
            <person name="Chenal-Francisque V."/>
            <person name="Souza B."/>
            <person name="Dacheux D."/>
            <person name="Elliott J.M."/>
            <person name="Derbise A."/>
            <person name="Hauser L.J."/>
            <person name="Garcia E."/>
        </authorList>
    </citation>
    <scope>NUCLEOTIDE SEQUENCE [LARGE SCALE GENOMIC DNA]</scope>
    <source>
        <strain>IP32953</strain>
    </source>
</reference>
<protein>
    <recommendedName>
        <fullName evidence="1">Biotin synthase</fullName>
        <ecNumber evidence="1">2.8.1.6</ecNumber>
    </recommendedName>
</protein>
<organism>
    <name type="scientific">Yersinia pseudotuberculosis serotype I (strain IP32953)</name>
    <dbReference type="NCBI Taxonomy" id="273123"/>
    <lineage>
        <taxon>Bacteria</taxon>
        <taxon>Pseudomonadati</taxon>
        <taxon>Pseudomonadota</taxon>
        <taxon>Gammaproteobacteria</taxon>
        <taxon>Enterobacterales</taxon>
        <taxon>Yersiniaceae</taxon>
        <taxon>Yersinia</taxon>
    </lineage>
</organism>
<comment type="function">
    <text evidence="1">Catalyzes the conversion of dethiobiotin (DTB) to biotin by the insertion of a sulfur atom into dethiobiotin via a radical-based mechanism.</text>
</comment>
<comment type="catalytic activity">
    <reaction evidence="1">
        <text>(4R,5S)-dethiobiotin + (sulfur carrier)-SH + 2 reduced [2Fe-2S]-[ferredoxin] + 2 S-adenosyl-L-methionine = (sulfur carrier)-H + biotin + 2 5'-deoxyadenosine + 2 L-methionine + 2 oxidized [2Fe-2S]-[ferredoxin]</text>
        <dbReference type="Rhea" id="RHEA:22060"/>
        <dbReference type="Rhea" id="RHEA-COMP:10000"/>
        <dbReference type="Rhea" id="RHEA-COMP:10001"/>
        <dbReference type="Rhea" id="RHEA-COMP:14737"/>
        <dbReference type="Rhea" id="RHEA-COMP:14739"/>
        <dbReference type="ChEBI" id="CHEBI:17319"/>
        <dbReference type="ChEBI" id="CHEBI:29917"/>
        <dbReference type="ChEBI" id="CHEBI:33737"/>
        <dbReference type="ChEBI" id="CHEBI:33738"/>
        <dbReference type="ChEBI" id="CHEBI:57586"/>
        <dbReference type="ChEBI" id="CHEBI:57844"/>
        <dbReference type="ChEBI" id="CHEBI:59789"/>
        <dbReference type="ChEBI" id="CHEBI:64428"/>
        <dbReference type="ChEBI" id="CHEBI:149473"/>
        <dbReference type="EC" id="2.8.1.6"/>
    </reaction>
</comment>
<comment type="cofactor">
    <cofactor evidence="1">
        <name>[4Fe-4S] cluster</name>
        <dbReference type="ChEBI" id="CHEBI:49883"/>
    </cofactor>
    <text evidence="1">Binds 1 [4Fe-4S] cluster. The cluster is coordinated with 3 cysteines and an exchangeable S-adenosyl-L-methionine.</text>
</comment>
<comment type="cofactor">
    <cofactor evidence="1">
        <name>[2Fe-2S] cluster</name>
        <dbReference type="ChEBI" id="CHEBI:190135"/>
    </cofactor>
    <text evidence="1">Binds 1 [2Fe-2S] cluster. The cluster is coordinated with 3 cysteines and 1 arginine.</text>
</comment>
<comment type="pathway">
    <text evidence="1">Cofactor biosynthesis; biotin biosynthesis; biotin from 7,8-diaminononanoate: step 2/2.</text>
</comment>
<comment type="subunit">
    <text evidence="1">Homodimer.</text>
</comment>
<comment type="similarity">
    <text evidence="1">Belongs to the radical SAM superfamily. Biotin synthase family.</text>
</comment>
<keyword id="KW-0001">2Fe-2S</keyword>
<keyword id="KW-0004">4Fe-4S</keyword>
<keyword id="KW-0093">Biotin biosynthesis</keyword>
<keyword id="KW-0408">Iron</keyword>
<keyword id="KW-0411">Iron-sulfur</keyword>
<keyword id="KW-0479">Metal-binding</keyword>
<keyword id="KW-0949">S-adenosyl-L-methionine</keyword>
<keyword id="KW-0808">Transferase</keyword>
<feature type="chain" id="PRO_0000381727" description="Biotin synthase">
    <location>
        <begin position="1"/>
        <end position="345"/>
    </location>
</feature>
<feature type="domain" description="Radical SAM core" evidence="2">
    <location>
        <begin position="38"/>
        <end position="256"/>
    </location>
</feature>
<feature type="binding site" evidence="1">
    <location>
        <position position="53"/>
    </location>
    <ligand>
        <name>[4Fe-4S] cluster</name>
        <dbReference type="ChEBI" id="CHEBI:49883"/>
        <note>4Fe-4S-S-AdoMet</note>
    </ligand>
</feature>
<feature type="binding site" evidence="1">
    <location>
        <position position="57"/>
    </location>
    <ligand>
        <name>[4Fe-4S] cluster</name>
        <dbReference type="ChEBI" id="CHEBI:49883"/>
        <note>4Fe-4S-S-AdoMet</note>
    </ligand>
</feature>
<feature type="binding site" evidence="1">
    <location>
        <position position="60"/>
    </location>
    <ligand>
        <name>[4Fe-4S] cluster</name>
        <dbReference type="ChEBI" id="CHEBI:49883"/>
        <note>4Fe-4S-S-AdoMet</note>
    </ligand>
</feature>
<feature type="binding site" evidence="1">
    <location>
        <position position="97"/>
    </location>
    <ligand>
        <name>[2Fe-2S] cluster</name>
        <dbReference type="ChEBI" id="CHEBI:190135"/>
    </ligand>
</feature>
<feature type="binding site" evidence="1">
    <location>
        <position position="128"/>
    </location>
    <ligand>
        <name>[2Fe-2S] cluster</name>
        <dbReference type="ChEBI" id="CHEBI:190135"/>
    </ligand>
</feature>
<feature type="binding site" evidence="1">
    <location>
        <position position="188"/>
    </location>
    <ligand>
        <name>[2Fe-2S] cluster</name>
        <dbReference type="ChEBI" id="CHEBI:190135"/>
    </ligand>
</feature>
<feature type="binding site" evidence="1">
    <location>
        <position position="260"/>
    </location>
    <ligand>
        <name>[2Fe-2S] cluster</name>
        <dbReference type="ChEBI" id="CHEBI:190135"/>
    </ligand>
</feature>
<evidence type="ECO:0000255" key="1">
    <source>
        <dbReference type="HAMAP-Rule" id="MF_01694"/>
    </source>
</evidence>
<evidence type="ECO:0000255" key="2">
    <source>
        <dbReference type="PROSITE-ProRule" id="PRU01266"/>
    </source>
</evidence>
<gene>
    <name evidence="1" type="primary">bioB</name>
    <name type="ordered locus">YPTB1182</name>
</gene>
<accession>Q66D67</accession>